<keyword id="KW-0903">Direct protein sequencing</keyword>
<keyword id="KW-0602">Photosynthesis</keyword>
<keyword id="KW-0603">Photosystem I</keyword>
<proteinExistence type="evidence at protein level"/>
<reference key="1">
    <citation type="journal article" date="1989" name="FEBS Lett.">
        <title>Identification of photosystem I components from the cyanobacterium, Synechococcus vulcanus by N-terminal sequencing.</title>
        <authorList>
            <person name="Koike H."/>
            <person name="Ikeuchi M."/>
            <person name="Hiyama T."/>
            <person name="Inoue Y."/>
        </authorList>
    </citation>
    <scope>PROTEIN SEQUENCE</scope>
</reference>
<feature type="chain" id="PRO_0000207756" description="Photosystem I reaction center subunit III">
    <location>
        <begin position="1"/>
        <end position="27" status="greater than"/>
    </location>
</feature>
<feature type="region of interest" description="Disordered" evidence="1">
    <location>
        <begin position="1"/>
        <end position="27"/>
    </location>
</feature>
<feature type="non-terminal residue">
    <location>
        <position position="27"/>
    </location>
</feature>
<sequence>DVAGLVPAKDSPAFQKRAAAAVNTTAD</sequence>
<evidence type="ECO:0000256" key="1">
    <source>
        <dbReference type="SAM" id="MobiDB-lite"/>
    </source>
</evidence>
<evidence type="ECO:0000305" key="2"/>
<gene>
    <name type="primary">psaF</name>
</gene>
<accession>P23078</accession>
<name>PSAF_THEVL</name>
<dbReference type="SMR" id="P23078"/>
<dbReference type="GO" id="GO:0009522">
    <property type="term" value="C:photosystem I"/>
    <property type="evidence" value="ECO:0007669"/>
    <property type="project" value="UniProtKB-KW"/>
</dbReference>
<dbReference type="GO" id="GO:0015979">
    <property type="term" value="P:photosynthesis"/>
    <property type="evidence" value="ECO:0007669"/>
    <property type="project" value="UniProtKB-KW"/>
</dbReference>
<comment type="function">
    <text>Probably participates in efficiency of electron transfer from plastocyanin to P700 (or cytochrome c553 in algae and cyanobacteria). This plastocyanin-docking protein contributes to the specific association of plastocyanin to PSI.</text>
</comment>
<comment type="similarity">
    <text evidence="2">Belongs to the PsaF family.</text>
</comment>
<protein>
    <recommendedName>
        <fullName>Photosystem I reaction center subunit III</fullName>
    </recommendedName>
    <alternativeName>
        <fullName>PSI-F</fullName>
    </alternativeName>
</protein>
<organism>
    <name type="scientific">Thermostichus vulcanus</name>
    <name type="common">Synechococcus vulcanus</name>
    <dbReference type="NCBI Taxonomy" id="32053"/>
    <lineage>
        <taxon>Bacteria</taxon>
        <taxon>Bacillati</taxon>
        <taxon>Cyanobacteriota</taxon>
        <taxon>Cyanophyceae</taxon>
        <taxon>Thermostichales</taxon>
        <taxon>Thermostichaceae</taxon>
        <taxon>Thermostichus</taxon>
    </lineage>
</organism>